<gene>
    <name evidence="12" type="primary">HT1</name>
    <name evidence="13" type="ORF">PF3D7_0204700</name>
</gene>
<reference evidence="14" key="1">
    <citation type="journal article" date="1998" name="Science">
        <title>Chromosome 2 sequence of the human malaria parasite Plasmodium falciparum.</title>
        <authorList>
            <person name="Gardner M.J."/>
            <person name="Tettelin H."/>
            <person name="Carucci D.J."/>
            <person name="Cummings L.M."/>
            <person name="Aravind L."/>
            <person name="Koonin E.V."/>
            <person name="Shallom S.J."/>
            <person name="Mason T."/>
            <person name="Yu K."/>
            <person name="Fujii C."/>
            <person name="Pederson J."/>
            <person name="Shen K."/>
            <person name="Jing J."/>
            <person name="Aston C."/>
            <person name="Lai Z."/>
            <person name="Schwartz D.C."/>
            <person name="Pertea M."/>
            <person name="Salzberg S.L."/>
            <person name="Zhou L."/>
            <person name="Sutton G.G."/>
            <person name="Clayton R."/>
            <person name="White O."/>
            <person name="Smith H.O."/>
            <person name="Fraser C.M."/>
            <person name="Adams M.D."/>
            <person name="Venter J.C."/>
            <person name="Hoffman S.L."/>
        </authorList>
    </citation>
    <scope>NUCLEOTIDE SEQUENCE [LARGE SCALE GENOMIC DNA]</scope>
    <source>
        <strain evidence="14">3D7</strain>
    </source>
</reference>
<reference evidence="14" key="2">
    <citation type="journal article" date="2002" name="Nature">
        <title>Genome sequence of the human malaria parasite Plasmodium falciparum.</title>
        <authorList>
            <person name="Gardner M.J."/>
            <person name="Hall N."/>
            <person name="Fung E."/>
            <person name="White O."/>
            <person name="Berriman M."/>
            <person name="Hyman R.W."/>
            <person name="Carlton J.M."/>
            <person name="Pain A."/>
            <person name="Nelson K.E."/>
            <person name="Bowman S."/>
            <person name="Paulsen I.T."/>
            <person name="James K.D."/>
            <person name="Eisen J.A."/>
            <person name="Rutherford K.M."/>
            <person name="Salzberg S.L."/>
            <person name="Craig A."/>
            <person name="Kyes S."/>
            <person name="Chan M.-S."/>
            <person name="Nene V."/>
            <person name="Shallom S.J."/>
            <person name="Suh B."/>
            <person name="Peterson J."/>
            <person name="Angiuoli S."/>
            <person name="Pertea M."/>
            <person name="Allen J."/>
            <person name="Selengut J."/>
            <person name="Haft D."/>
            <person name="Mather M.W."/>
            <person name="Vaidya A.B."/>
            <person name="Martin D.M.A."/>
            <person name="Fairlamb A.H."/>
            <person name="Fraunholz M.J."/>
            <person name="Roos D.S."/>
            <person name="Ralph S.A."/>
            <person name="McFadden G.I."/>
            <person name="Cummings L.M."/>
            <person name="Subramanian G.M."/>
            <person name="Mungall C."/>
            <person name="Venter J.C."/>
            <person name="Carucci D.J."/>
            <person name="Hoffman S.L."/>
            <person name="Newbold C."/>
            <person name="Davis R.W."/>
            <person name="Fraser C.M."/>
            <person name="Barrell B.G."/>
        </authorList>
    </citation>
    <scope>NUCLEOTIDE SEQUENCE [LARGE SCALE GENOMIC DNA]</scope>
    <source>
        <strain evidence="14">3D7</strain>
    </source>
</reference>
<reference evidence="12" key="3">
    <citation type="journal article" date="1999" name="J. Biol. Chem.">
        <title>Intraerythrocytic Plasmodium falciparum expresses a high affinity facilitative hexose transporter.</title>
        <authorList>
            <person name="Woodrow C.J."/>
            <person name="Penny J.I."/>
            <person name="Krishna S."/>
        </authorList>
    </citation>
    <scope>FUNCTION</scope>
    <scope>TRANSPORTER ACTIVITY</scope>
    <scope>ACTIVITY REGULATION</scope>
    <scope>BIOPHYSICOCHEMICAL PROPERTIES</scope>
    <scope>SUBCELLULAR LOCATION</scope>
    <scope>DEVELOPMENTAL STAGE</scope>
    <source>
        <strain evidence="9">3D7</strain>
    </source>
</reference>
<reference evidence="12" key="4">
    <citation type="journal article" date="2000" name="Proc. Natl. Acad. Sci. U.S.A.">
        <title>Hexose permeation pathways in Plasmodium falciparum-infected erythrocytes.</title>
        <authorList>
            <person name="Woodrow C.J."/>
            <person name="Burchmore R.J."/>
            <person name="Krishna S."/>
        </authorList>
    </citation>
    <scope>FUNCTION</scope>
    <scope>TRANSPORTER ACTIVITY</scope>
    <scope>BIOPHYSICOCHEMICAL PROPERTIES</scope>
    <scope>MUTAGENESIS OF GLN-169</scope>
    <source>
        <strain evidence="10">3D7</strain>
    </source>
</reference>
<reference evidence="12" key="5">
    <citation type="journal article" date="2002" name="Biochem. J.">
        <title>Comparative characterization of hexose transporters of Plasmodium knowlesi, Plasmodium yoelii and Toxoplasma gondii highlights functional differences within the apicomplexan family.</title>
        <authorList>
            <person name="Joet T."/>
            <person name="Holterman L."/>
            <person name="Stedman T.T."/>
            <person name="Kocken C.H."/>
            <person name="Van Der Wel A."/>
            <person name="Thomas A.W."/>
            <person name="Krishna S."/>
        </authorList>
    </citation>
    <scope>FUNCTION</scope>
    <scope>CATALYTIC ACTIVITY</scope>
    <scope>BIOPHYSICOCHEMICAL PROPERTIES</scope>
</reference>
<reference evidence="12" key="6">
    <citation type="journal article" date="2002" name="J. Biol. Chem.">
        <title>Mutational analysis of the hexose transporter of Plasmodium falciparum and development of a three-dimensional model.</title>
        <authorList>
            <person name="Manning S.K."/>
            <person name="Woodrow C."/>
            <person name="Zuniga F.A."/>
            <person name="Iserovich P."/>
            <person name="Fischbarg J."/>
            <person name="Louw A.I."/>
            <person name="Krishna S."/>
        </authorList>
    </citation>
    <scope>MUTAGENESIS OF 302-SER--LEU-304; SER-302 AND LEU-304</scope>
</reference>
<reference evidence="12" key="7">
    <citation type="journal article" date="2003" name="Proc. Natl. Acad. Sci. U.S.A.">
        <title>Validation of the hexose transporter of Plasmodium falciparum as a novel drug target.</title>
        <authorList>
            <person name="Joet T."/>
            <person name="Eckstein-Ludwig U."/>
            <person name="Morin C."/>
            <person name="Krishna S."/>
        </authorList>
    </citation>
    <scope>FUNCTION</scope>
    <scope>TRANSPORTER ACTIVITY</scope>
    <scope>ACTIVITY REGULATION</scope>
    <scope>MUTAGENESIS OF GLN-169</scope>
</reference>
<reference evidence="15 16" key="8">
    <citation type="journal article" date="2020" name="Cell">
        <title>Structural Basis for Blocking Sugar Uptake into the Malaria Parasite Plasmodium falciparum.</title>
        <authorList>
            <person name="Jiang X."/>
            <person name="Yuan Y."/>
            <person name="Huang J."/>
            <person name="Zhang S."/>
            <person name="Luo S."/>
            <person name="Wang N."/>
            <person name="Pu D."/>
            <person name="Zhao N."/>
            <person name="Tang Q."/>
            <person name="Hirata K."/>
            <person name="Yang X."/>
            <person name="Jiao Y."/>
            <person name="Sakata-Kato T."/>
            <person name="Wu J.W."/>
            <person name="Yan C."/>
            <person name="Kato N."/>
            <person name="Yin H."/>
            <person name="Yan N."/>
        </authorList>
    </citation>
    <scope>X-RAY CRYSTALLOGRAPHY (2.60 ANGSTROMS) IN COMPLEX WITH BETA-D-GLUCOSE</scope>
    <scope>FUNCTION</scope>
    <scope>TRANSPORTER ACTIVITY</scope>
    <scope>ACTIVITY REGULATION</scope>
    <scope>BIOPHYSICOCHEMICAL PROPERTIES</scope>
    <scope>DISULFIDE BONDS</scope>
    <scope>MUTAGENESIS OF LYS-51 AND ASP-447</scope>
</reference>
<reference evidence="17" key="9">
    <citation type="journal article" date="2020" name="Nature">
        <title>The molecular basis for sugar import in malaria parasites.</title>
        <authorList>
            <person name="Qureshi A.A."/>
            <person name="Suades A."/>
            <person name="Matsuoka R."/>
            <person name="Brock J."/>
            <person name="McComas S.E."/>
            <person name="Nji E."/>
            <person name="Orellana L."/>
            <person name="Claesson M."/>
            <person name="Delemotte L."/>
            <person name="Drew D."/>
        </authorList>
    </citation>
    <scope>X-RAY CRYSTALLOGRAPHY (3.65 ANGSTROMS) OF 20-504 IN COMPLEX WITH ALPHA-D-GLUCOSE</scope>
    <scope>FUNCTION</scope>
    <scope>TRANSPORTER ACTIVITY</scope>
    <scope>ACTIVITY REGULATION</scope>
    <scope>BIOPHYSICOCHEMICAL PROPERTIES</scope>
    <scope>SUBUNIT</scope>
    <scope>MUTAGENESIS OF ASN-48; LYS-51; HIS-168; GLN-169; GLN-305; GLN-306; ILE-310; ASN-311; VAL-314; SER-315; ASN-316; SER-317; ASN-318; GLU-319; ASN-341; PHE-403; ALA-404; TRP-412; ASN-435; TRP-436 AND ALA-439</scope>
</reference>
<comment type="function">
    <text evidence="2 3 5 6 7 8">Sodium-independent facilitative hexose transporter (PubMed:10066789). Can transport D-glucose and D-fructose (PubMed:10066789, PubMed:10954735, PubMed:12238947, PubMed:12792024, PubMed:31996846, PubMed:32860739). Can transport D-mannose, D-galactose, D-xylose and D-glucosamine (PubMed:31996846).</text>
</comment>
<comment type="catalytic activity">
    <reaction evidence="2 3 5 6 7 8">
        <text>D-glucose(out) = D-glucose(in)</text>
        <dbReference type="Rhea" id="RHEA:60376"/>
        <dbReference type="ChEBI" id="CHEBI:4167"/>
    </reaction>
    <physiologicalReaction direction="left-to-right" evidence="12">
        <dbReference type="Rhea" id="RHEA:60377"/>
    </physiologicalReaction>
</comment>
<comment type="catalytic activity">
    <reaction evidence="3 6 7">
        <text>D-fructose(out) = D-fructose(in)</text>
        <dbReference type="Rhea" id="RHEA:60372"/>
        <dbReference type="ChEBI" id="CHEBI:37721"/>
    </reaction>
    <physiologicalReaction direction="left-to-right" evidence="12">
        <dbReference type="Rhea" id="RHEA:60373"/>
    </physiologicalReaction>
</comment>
<comment type="catalytic activity">
    <reaction evidence="7">
        <text>D-galactose(in) = D-galactose(out)</text>
        <dbReference type="Rhea" id="RHEA:34915"/>
        <dbReference type="ChEBI" id="CHEBI:4139"/>
    </reaction>
    <physiologicalReaction direction="right-to-left" evidence="12">
        <dbReference type="Rhea" id="RHEA:34917"/>
    </physiologicalReaction>
</comment>
<comment type="catalytic activity">
    <reaction evidence="7">
        <text>D-mannose(out) = D-mannose(in)</text>
        <dbReference type="Rhea" id="RHEA:78391"/>
        <dbReference type="ChEBI" id="CHEBI:4208"/>
    </reaction>
    <physiologicalReaction direction="left-to-right" evidence="12">
        <dbReference type="Rhea" id="RHEA:78392"/>
    </physiologicalReaction>
</comment>
<comment type="catalytic activity">
    <reaction evidence="7">
        <text>D-glucosamine(out) = D-glucosamine(in)</text>
        <dbReference type="Rhea" id="RHEA:78423"/>
        <dbReference type="ChEBI" id="CHEBI:58723"/>
    </reaction>
    <physiologicalReaction direction="left-to-right" evidence="12">
        <dbReference type="Rhea" id="RHEA:78424"/>
    </physiologicalReaction>
</comment>
<comment type="catalytic activity">
    <reaction evidence="7">
        <text>D-xylose(out) = D-xylose(in)</text>
        <dbReference type="Rhea" id="RHEA:78427"/>
        <dbReference type="ChEBI" id="CHEBI:53455"/>
    </reaction>
    <physiologicalReaction direction="left-to-right" evidence="12">
        <dbReference type="Rhea" id="RHEA:78428"/>
    </physiologicalReaction>
</comment>
<comment type="activity regulation">
    <text evidence="2 6 7 8">Inhibited by cytochalasin B (PubMed:10066789, PubMed:31996846). Inhibited by compound 3361 (3-O-((undec-10-en)-1-yl)-D-glucose) (PubMed:12792024, PubMed:31996846, PubMed:32860739). Inhibited by compound HTI-1 (PubMed:32860739).</text>
</comment>
<comment type="biophysicochemical properties">
    <kinetics>
        <KM evidence="2">0.48 mM for D-glucose</KM>
        <KM evidence="3">1 mM for D-glucose</KM>
        <KM evidence="3">11 mM for D-fructose</KM>
        <KM evidence="8">1.59 mM for D-glucose</KM>
        <KM evidence="7">0.8 mM for D-glucose</KM>
        <KM evidence="7">1.48 mM for D-mannose</KM>
        <KM evidence="7">9.54 mM for D-galactose</KM>
        <KM evidence="7">9.55 mM for D-fructose</KM>
        <KM evidence="7">14.69 mM for D-glucosamine</KM>
        <Vmax evidence="8">2.5 umol/min/mg enzyme for D-glucose</Vmax>
        <Vmax evidence="7">21.11 umol/min/mg enzyme for D-glucose</Vmax>
        <Vmax evidence="7">13.04 umol/min/mg enzyme for D-mannose</Vmax>
        <Vmax evidence="7">50.29 umol/min/mg enzyme for D-galactose</Vmax>
        <Vmax evidence="7">33.11 umol/min/mg enzyme for D-fructose</Vmax>
        <Vmax evidence="7">8.72 umol/min/mg enzyme for D-glucosamine</Vmax>
        <text evidence="7">kcat is 19.35 sec(-1) for D-glucose transport (PubMed:31996846). kcat is 11.95 sec(-1) for D-mannose transport (PubMed:31996846). kcat is 46.10 sec(-1) for D-galactose transport (PubMed:31996846). kcat is 30.36 sec(-1) for D-fructose transport (PubMed:31996846). kcat is 8.01 sec(-1) for D-glucosamine transport (PubMed:31996846).</text>
    </kinetics>
    <temperatureDependence>
        <text evidence="5">Active from 32 to 42 degrees Celsius (PubMed:12238947). Retains 50% of its maximal activity at 20 degrees Celsius (PubMed:12238947).</text>
    </temperatureDependence>
</comment>
<comment type="subunit">
    <text evidence="7">Homodimer.</text>
</comment>
<comment type="subcellular location">
    <subcellularLocation>
        <location evidence="2">Cell membrane</location>
        <topology evidence="1">Multi-pass membrane protein</topology>
    </subcellularLocation>
</comment>
<comment type="developmental stage">
    <text evidence="2">Highly expressed at the small ring stage (PubMed:10066789). Levels decrease at 16 hours after erythrocyte invasion and increase again when parasites develop into more mature stages (PubMed:10066789). Expressed at intermediate levels in trophozoites and meronts (PubMed:10066789).</text>
</comment>
<comment type="miscellaneous">
    <text evidence="2 3 7">Experiments with hexose analogs indicate that hydroxyl groups at positions C-3 and C-4 of glucose are important for high affinity interactions with HT1.</text>
</comment>
<comment type="similarity">
    <text evidence="12">Belongs to the major facilitator superfamily. Sugar transporter (TC 2.A.1.1) family.</text>
</comment>
<comment type="caution">
    <text evidence="3 7">Contradicting results for mutagenesis of Gln-169 (PubMed:10954735, PubMed:31996846). In one study, mutagenesis of Gln-169 resulted in the loss of both D-glucose and D-fructose transport activities (PubMed:31996846). In the other study, mutation at this position abolished D-fructose transport but not D-glucose transport activity (PubMed:10954735).</text>
</comment>
<proteinExistence type="evidence at protein level"/>
<keyword id="KW-0002">3D-structure</keyword>
<keyword id="KW-1003">Cell membrane</keyword>
<keyword id="KW-1015">Disulfide bond</keyword>
<keyword id="KW-0472">Membrane</keyword>
<keyword id="KW-1185">Reference proteome</keyword>
<keyword id="KW-0762">Sugar transport</keyword>
<keyword id="KW-0812">Transmembrane</keyword>
<keyword id="KW-1133">Transmembrane helix</keyword>
<keyword id="KW-0813">Transport</keyword>
<sequence length="504" mass="56417">MTKSSKDICSENEGKKNGKSGFFSTSFKYVLSACIASFIFGYQVSVLNTIKNFIVVEFEWCKGEKDRLNCSNNTIQSSFLLASVFIGAVLGCGFSGYLVQFGRRLSLLIIYNFFFLVSILTSITHHFHTILFARLLSGFGIGLVTVSVPMYISEMTHKDKKGAYGVMHQLFITFGIFVAVMLGLAMGEGPKADSTEPLTSFAKLWWRLMFLFPSVISLIGILALVVFFKEETPYFLFEKGRIEESKNILKKIYETDNVDEPLNAIKEAVEQNESAKKNSLSLLSALKIPSYRYVIILGCLLSGLQQFTGINVLVSNSNELYKEFLDSHLITILSVVMTAVNFLMTFPAIYIVEKLGRKTLLLWGCVGVLVAYLPTAIANEINRNSNFVKILSIVATFVMIISFAVSYGPVLWIYLHEMFPSEIKDSAASLASLVNWVCAIIVVFPSDIIIKKSPSILFIVFSVMSILTFFFIFFFIKETKGGEIGTSPYITMEERQKHMTKSVV</sequence>
<organism evidence="14">
    <name type="scientific">Plasmodium falciparum (isolate 3D7)</name>
    <dbReference type="NCBI Taxonomy" id="36329"/>
    <lineage>
        <taxon>Eukaryota</taxon>
        <taxon>Sar</taxon>
        <taxon>Alveolata</taxon>
        <taxon>Apicomplexa</taxon>
        <taxon>Aconoidasida</taxon>
        <taxon>Haemosporida</taxon>
        <taxon>Plasmodiidae</taxon>
        <taxon>Plasmodium</taxon>
        <taxon>Plasmodium (Laverania)</taxon>
    </lineage>
</organism>
<feature type="chain" id="PRO_0000460194" description="Hexose transporter 1">
    <location>
        <begin position="1"/>
        <end position="504"/>
    </location>
</feature>
<feature type="topological domain" description="Cytoplasmic" evidence="12">
    <location>
        <begin position="1"/>
        <end position="29"/>
    </location>
</feature>
<feature type="transmembrane region" description="Helical" evidence="1">
    <location>
        <begin position="30"/>
        <end position="50"/>
    </location>
</feature>
<feature type="topological domain" description="Extracellular" evidence="12">
    <location>
        <begin position="51"/>
        <end position="78"/>
    </location>
</feature>
<feature type="transmembrane region" description="Helical" evidence="1">
    <location>
        <begin position="79"/>
        <end position="99"/>
    </location>
</feature>
<feature type="topological domain" description="Cytoplasmic" evidence="12">
    <location>
        <begin position="100"/>
        <end position="104"/>
    </location>
</feature>
<feature type="transmembrane region" description="Helical" evidence="1">
    <location>
        <begin position="105"/>
        <end position="125"/>
    </location>
</feature>
<feature type="topological domain" description="Extracellular" evidence="12">
    <location>
        <begin position="126"/>
        <end position="129"/>
    </location>
</feature>
<feature type="transmembrane region" description="Helical" evidence="1">
    <location>
        <begin position="130"/>
        <end position="150"/>
    </location>
</feature>
<feature type="topological domain" description="Cytoplasmic" evidence="12">
    <location>
        <begin position="151"/>
        <end position="165"/>
    </location>
</feature>
<feature type="transmembrane region" description="Helical" evidence="1">
    <location>
        <begin position="166"/>
        <end position="186"/>
    </location>
</feature>
<feature type="topological domain" description="Extracellular" evidence="12">
    <location>
        <begin position="187"/>
        <end position="207"/>
    </location>
</feature>
<feature type="transmembrane region" description="Helical" evidence="1">
    <location>
        <begin position="208"/>
        <end position="228"/>
    </location>
</feature>
<feature type="topological domain" description="Cytoplasmic" evidence="12">
    <location>
        <begin position="229"/>
        <end position="293"/>
    </location>
</feature>
<feature type="transmembrane region" description="Helical" evidence="1">
    <location>
        <begin position="294"/>
        <end position="314"/>
    </location>
</feature>
<feature type="topological domain" description="Extracellular" evidence="12">
    <location>
        <begin position="315"/>
        <end position="331"/>
    </location>
</feature>
<feature type="transmembrane region" description="Helical" evidence="1">
    <location>
        <begin position="332"/>
        <end position="352"/>
    </location>
</feature>
<feature type="topological domain" description="Cytoplasmic" evidence="12">
    <location>
        <begin position="353"/>
        <end position="358"/>
    </location>
</feature>
<feature type="transmembrane region" description="Helical" evidence="1">
    <location>
        <begin position="359"/>
        <end position="379"/>
    </location>
</feature>
<feature type="topological domain" description="Extracellular" evidence="12">
    <location>
        <begin position="380"/>
        <end position="392"/>
    </location>
</feature>
<feature type="transmembrane region" description="Helical" evidence="1">
    <location>
        <begin position="393"/>
        <end position="413"/>
    </location>
</feature>
<feature type="topological domain" description="Cytoplasmic" evidence="12">
    <location>
        <begin position="414"/>
        <end position="429"/>
    </location>
</feature>
<feature type="transmembrane region" description="Helical" evidence="1">
    <location>
        <begin position="430"/>
        <end position="450"/>
    </location>
</feature>
<feature type="topological domain" description="Extracellular" evidence="12">
    <location>
        <begin position="451"/>
        <end position="455"/>
    </location>
</feature>
<feature type="transmembrane region" description="Helical" evidence="1">
    <location>
        <begin position="456"/>
        <end position="476"/>
    </location>
</feature>
<feature type="topological domain" description="Cytoplasmic" evidence="12">
    <location>
        <begin position="477"/>
        <end position="504"/>
    </location>
</feature>
<feature type="binding site" evidence="7 17">
    <location>
        <position position="169"/>
    </location>
    <ligand>
        <name>alpha-D-glucose</name>
        <dbReference type="ChEBI" id="CHEBI:17925"/>
    </ligand>
</feature>
<feature type="binding site" evidence="8 15">
    <location>
        <position position="169"/>
    </location>
    <ligand>
        <name>beta-D-glucose</name>
        <dbReference type="ChEBI" id="CHEBI:15903"/>
    </ligand>
</feature>
<feature type="binding site" evidence="7 17">
    <location>
        <position position="305"/>
    </location>
    <ligand>
        <name>alpha-D-glucose</name>
        <dbReference type="ChEBI" id="CHEBI:17925"/>
    </ligand>
</feature>
<feature type="binding site" evidence="8 15">
    <location>
        <position position="305"/>
    </location>
    <ligand>
        <name>beta-D-glucose</name>
        <dbReference type="ChEBI" id="CHEBI:15903"/>
    </ligand>
</feature>
<feature type="binding site" evidence="7 17">
    <location>
        <position position="306"/>
    </location>
    <ligand>
        <name>alpha-D-glucose</name>
        <dbReference type="ChEBI" id="CHEBI:17925"/>
    </ligand>
</feature>
<feature type="binding site" evidence="7 17">
    <location>
        <position position="311"/>
    </location>
    <ligand>
        <name>alpha-D-glucose</name>
        <dbReference type="ChEBI" id="CHEBI:17925"/>
    </ligand>
</feature>
<feature type="binding site" evidence="8 15">
    <location>
        <position position="311"/>
    </location>
    <ligand>
        <name>beta-D-glucose</name>
        <dbReference type="ChEBI" id="CHEBI:15903"/>
    </ligand>
</feature>
<feature type="binding site" evidence="8 15">
    <location>
        <position position="341"/>
    </location>
    <ligand>
        <name>beta-D-glucose</name>
        <dbReference type="ChEBI" id="CHEBI:15903"/>
    </ligand>
</feature>
<feature type="binding site" evidence="7 17">
    <location>
        <position position="412"/>
    </location>
    <ligand>
        <name>alpha-D-glucose</name>
        <dbReference type="ChEBI" id="CHEBI:17925"/>
    </ligand>
</feature>
<feature type="disulfide bond" evidence="8 15 16">
    <location>
        <begin position="61"/>
        <end position="70"/>
    </location>
</feature>
<feature type="mutagenesis site" description="Reduces D-glucose and D-fructose transport activity." evidence="7">
    <original>N</original>
    <variation>A</variation>
    <location>
        <position position="48"/>
    </location>
</feature>
<feature type="mutagenesis site" description="Reduces D-glucose and D-fructose transport activity. Reduces susceptibility to inhibition by compound HTI-1. Reduces susceptibility to inhibition by compound HTI-1; when associated with A-447." evidence="7 8">
    <original>K</original>
    <variation>A</variation>
    <location>
        <position position="51"/>
    </location>
</feature>
<feature type="mutagenesis site" description="Reduces D-glucose and D-fructose transport activity." evidence="7">
    <original>K</original>
    <variation>Q</variation>
    <location>
        <position position="51"/>
    </location>
</feature>
<feature type="mutagenesis site" description="Reduces D-glucose and D-fructose transport activity." evidence="7">
    <original>H</original>
    <variation>N</variation>
    <location>
        <position position="168"/>
    </location>
</feature>
<feature type="mutagenesis site" description="Abolishes D-glucose and D-fructose transport activity." evidence="7">
    <original>Q</original>
    <variation>A</variation>
    <location>
        <position position="169"/>
    </location>
</feature>
<feature type="mutagenesis site" description="In one study, shown to abolish D-glucose and D-fructose transport activity. In another study, shown to abolish D-fructose transport with no significant effects on D-glucose uptake and affinity. Reduces susceptibility to inhibition by compound 3361." evidence="3 6 7">
    <original>Q</original>
    <variation>N</variation>
    <location>
        <position position="169"/>
    </location>
</feature>
<feature type="mutagenesis site" description="No significant effects on affinity for D-glucose and D-fructose." evidence="4">
    <original>SGL</original>
    <variation>AGT</variation>
    <location>
        <begin position="302"/>
        <end position="304"/>
    </location>
</feature>
<feature type="mutagenesis site" description="No significant effects on affinity for D-glucose and D-fructose." evidence="4">
    <original>S</original>
    <variation>A</variation>
    <location>
        <position position="302"/>
    </location>
</feature>
<feature type="mutagenesis site" description="No significant effects on affinity for D-glucose and D-fructose." evidence="4">
    <original>L</original>
    <variation>T</variation>
    <location>
        <position position="304"/>
    </location>
</feature>
<feature type="mutagenesis site" description="Reduces D-glucose and D-fructose transport activity." evidence="7">
    <original>Q</original>
    <variation>A</variation>
    <location>
        <position position="305"/>
    </location>
</feature>
<feature type="mutagenesis site" description="Reduces D-glucose and D-fructose transport activity." evidence="7">
    <original>Q</original>
    <variation>A</variation>
    <location>
        <position position="306"/>
    </location>
</feature>
<feature type="mutagenesis site" description="Reduces D-glucose and D-fructose transport activity." evidence="7">
    <original>I</original>
    <variation>A</variation>
    <location>
        <position position="310"/>
    </location>
</feature>
<feature type="mutagenesis site" description="Reduces D-glucose and D-fructose transport activity." evidence="7">
    <original>N</original>
    <variation>A</variation>
    <location>
        <position position="311"/>
    </location>
</feature>
<feature type="mutagenesis site" description="Reduces D-glucose and D-fructose transport activity." evidence="7">
    <original>V</original>
    <variation>F</variation>
    <location>
        <position position="314"/>
    </location>
</feature>
<feature type="mutagenesis site" description="No significant effects on D-glucose and D-fructose transport activities. Reduces turnover number for D-glucose." evidence="7">
    <original>S</original>
    <variation>A</variation>
    <location>
        <position position="315"/>
    </location>
</feature>
<feature type="mutagenesis site" description="Reduces D-glucose and D-fructose transport activity." evidence="7">
    <original>S</original>
    <variation>Y</variation>
    <location>
        <position position="315"/>
    </location>
</feature>
<feature type="mutagenesis site" description="Reduces D-glucose and D-fructose transport activity." evidence="7">
    <original>N</original>
    <variation>A</variation>
    <variation>Y</variation>
    <location>
        <position position="316"/>
    </location>
</feature>
<feature type="mutagenesis site" description="Reduces D-glucose and D-fructose transport activity." evidence="7">
    <original>S</original>
    <variation>A</variation>
    <location>
        <position position="317"/>
    </location>
</feature>
<feature type="mutagenesis site" description="Reduces D-glucose and D-fructose transport activity." evidence="7">
    <original>N</original>
    <variation>A</variation>
    <location>
        <position position="318"/>
    </location>
</feature>
<feature type="mutagenesis site" description="No significant effects on D-glucose and D-fructose transport activities. Reduces turnover number for D-glucose." evidence="7">
    <original>E</original>
    <variation>A</variation>
    <location>
        <position position="319"/>
    </location>
</feature>
<feature type="mutagenesis site" description="Abolishes D-glucose and D-fructose transport activity." evidence="7">
    <original>N</original>
    <variation>A</variation>
    <location>
        <position position="341"/>
    </location>
</feature>
<feature type="mutagenesis site" description="Reduces D-glucose and D-fructose transport activity." evidence="7">
    <original>F</original>
    <variation>A</variation>
    <location>
        <position position="403"/>
    </location>
</feature>
<feature type="mutagenesis site" description="Modestly reduces D-glucose and D-fructose transport activities and affinities for these substrates." evidence="7">
    <original>A</original>
    <variation>E</variation>
    <location>
        <position position="404"/>
    </location>
</feature>
<feature type="mutagenesis site" description="Reduces D-fructose transport with no significant effect on D-glucose uptake." evidence="7">
    <original>W</original>
    <variation>A</variation>
    <location>
        <position position="412"/>
    </location>
</feature>
<feature type="mutagenesis site" description="Reduces D-fructose transport with no significant effect on D-glucose uptake." evidence="7">
    <original>N</original>
    <variation>A</variation>
    <location>
        <position position="435"/>
    </location>
</feature>
<feature type="mutagenesis site" description="Reduces D-glucose and D-fructose transport activity." evidence="7">
    <original>W</original>
    <variation>A</variation>
    <location>
        <position position="436"/>
    </location>
</feature>
<feature type="mutagenesis site" description="Reduces D-glucose and D-fructose transport activity." evidence="7">
    <original>A</original>
    <variation>N</variation>
    <location>
        <position position="439"/>
    </location>
</feature>
<feature type="mutagenesis site" description="Reduces susceptibility to inhibition by compound HTI-1; when associated with A-51." evidence="8">
    <original>D</original>
    <variation>A</variation>
    <location>
        <position position="447"/>
    </location>
</feature>
<accession>Q7KWJ5</accession>
<protein>
    <recommendedName>
        <fullName evidence="9">Hexose transporter 1</fullName>
        <shortName evidence="9 10 11">PfHT1</shortName>
    </recommendedName>
</protein>
<name>HXT1_PLAF7</name>
<evidence type="ECO:0000255" key="1"/>
<evidence type="ECO:0000269" key="2">
    <source>
    </source>
</evidence>
<evidence type="ECO:0000269" key="3">
    <source>
    </source>
</evidence>
<evidence type="ECO:0000269" key="4">
    <source>
    </source>
</evidence>
<evidence type="ECO:0000269" key="5">
    <source>
    </source>
</evidence>
<evidence type="ECO:0000269" key="6">
    <source>
    </source>
</evidence>
<evidence type="ECO:0000269" key="7">
    <source>
    </source>
</evidence>
<evidence type="ECO:0000269" key="8">
    <source>
    </source>
</evidence>
<evidence type="ECO:0000303" key="9">
    <source>
    </source>
</evidence>
<evidence type="ECO:0000303" key="10">
    <source>
    </source>
</evidence>
<evidence type="ECO:0000303" key="11">
    <source>
    </source>
</evidence>
<evidence type="ECO:0000305" key="12"/>
<evidence type="ECO:0000312" key="13">
    <source>
        <dbReference type="EMBL" id="CZT98059.1"/>
    </source>
</evidence>
<evidence type="ECO:0000312" key="14">
    <source>
        <dbReference type="Proteomes" id="UP000001450"/>
    </source>
</evidence>
<evidence type="ECO:0007744" key="15">
    <source>
        <dbReference type="PDB" id="6M20"/>
    </source>
</evidence>
<evidence type="ECO:0007744" key="16">
    <source>
        <dbReference type="PDB" id="6M2L"/>
    </source>
</evidence>
<evidence type="ECO:0007744" key="17">
    <source>
        <dbReference type="PDB" id="6RW3"/>
    </source>
</evidence>
<dbReference type="EMBL" id="LN999943">
    <property type="protein sequence ID" value="CZT98059.1"/>
    <property type="molecule type" value="Genomic_DNA"/>
</dbReference>
<dbReference type="RefSeq" id="XP_001349558.1">
    <property type="nucleotide sequence ID" value="XM_001349522.1"/>
</dbReference>
<dbReference type="PDB" id="6M20">
    <property type="method" value="X-ray"/>
    <property type="resolution" value="2.60 A"/>
    <property type="chains" value="A/B/C/D=1-504"/>
</dbReference>
<dbReference type="PDB" id="6M2L">
    <property type="method" value="X-ray"/>
    <property type="resolution" value="3.70 A"/>
    <property type="chains" value="A/B=1-504"/>
</dbReference>
<dbReference type="PDB" id="6RW3">
    <property type="method" value="X-ray"/>
    <property type="resolution" value="3.65 A"/>
    <property type="chains" value="A/B/C/D=20-504"/>
</dbReference>
<dbReference type="PDBsum" id="6M20"/>
<dbReference type="PDBsum" id="6M2L"/>
<dbReference type="PDBsum" id="6RW3"/>
<dbReference type="SMR" id="Q7KWJ5"/>
<dbReference type="STRING" id="36329.Q7KWJ5"/>
<dbReference type="GuidetoPHARMACOLOGY" id="3069"/>
<dbReference type="SwissPalm" id="Q7KWJ5"/>
<dbReference type="PaxDb" id="5833-PFB0210c"/>
<dbReference type="EnsemblProtists" id="CZT98059">
    <property type="protein sequence ID" value="CZT98059"/>
    <property type="gene ID" value="PF3D7_0204700"/>
</dbReference>
<dbReference type="GeneID" id="812640"/>
<dbReference type="KEGG" id="pfa:PF3D7_0204700"/>
<dbReference type="VEuPathDB" id="PlasmoDB:PF3D7_0204700"/>
<dbReference type="HOGENOM" id="CLU_001265_30_5_1"/>
<dbReference type="InParanoid" id="Q7KWJ5"/>
<dbReference type="OMA" id="WAITASF"/>
<dbReference type="OrthoDB" id="6612291at2759"/>
<dbReference type="PhylomeDB" id="Q7KWJ5"/>
<dbReference type="Reactome" id="R-PFA-189200">
    <property type="pathway name" value="Cellular hexose transport"/>
</dbReference>
<dbReference type="Reactome" id="R-PFA-196836">
    <property type="pathway name" value="Vitamin C (ascorbate) metabolism"/>
</dbReference>
<dbReference type="Reactome" id="R-PFA-422356">
    <property type="pathway name" value="Regulation of insulin secretion"/>
</dbReference>
<dbReference type="Reactome" id="R-PFA-5653890">
    <property type="pathway name" value="Lactose synthesis"/>
</dbReference>
<dbReference type="Reactome" id="R-PFA-6798695">
    <property type="pathway name" value="Neutrophil degranulation"/>
</dbReference>
<dbReference type="Reactome" id="R-PFA-8981373">
    <property type="pathway name" value="Intestinal hexose absorption"/>
</dbReference>
<dbReference type="Proteomes" id="UP000001450">
    <property type="component" value="Chromosome 2"/>
</dbReference>
<dbReference type="GO" id="GO:0016020">
    <property type="term" value="C:membrane"/>
    <property type="evidence" value="ECO:0000318"/>
    <property type="project" value="GO_Central"/>
</dbReference>
<dbReference type="GO" id="GO:0005886">
    <property type="term" value="C:plasma membrane"/>
    <property type="evidence" value="ECO:0007669"/>
    <property type="project" value="UniProtKB-SubCell"/>
</dbReference>
<dbReference type="GO" id="GO:0005353">
    <property type="term" value="F:fructose transmembrane transporter activity"/>
    <property type="evidence" value="ECO:0000314"/>
    <property type="project" value="GeneDB"/>
</dbReference>
<dbReference type="GO" id="GO:0015149">
    <property type="term" value="F:hexose transmembrane transporter activity"/>
    <property type="evidence" value="ECO:0000314"/>
    <property type="project" value="GeneDB"/>
</dbReference>
<dbReference type="GO" id="GO:0008645">
    <property type="term" value="P:hexose transmembrane transport"/>
    <property type="evidence" value="ECO:0000314"/>
    <property type="project" value="GeneDB"/>
</dbReference>
<dbReference type="GO" id="GO:0015749">
    <property type="term" value="P:monosaccharide transmembrane transport"/>
    <property type="evidence" value="ECO:0000318"/>
    <property type="project" value="GO_Central"/>
</dbReference>
<dbReference type="CDD" id="cd17315">
    <property type="entry name" value="MFS_GLUT_like"/>
    <property type="match status" value="1"/>
</dbReference>
<dbReference type="FunFam" id="1.20.1250.20:FF:000442">
    <property type="entry name" value="Hexose transporter"/>
    <property type="match status" value="1"/>
</dbReference>
<dbReference type="Gene3D" id="1.20.1250.20">
    <property type="entry name" value="MFS general substrate transporter like domains"/>
    <property type="match status" value="1"/>
</dbReference>
<dbReference type="InterPro" id="IPR045263">
    <property type="entry name" value="GLUT"/>
</dbReference>
<dbReference type="InterPro" id="IPR020846">
    <property type="entry name" value="MFS_dom"/>
</dbReference>
<dbReference type="InterPro" id="IPR005828">
    <property type="entry name" value="MFS_sugar_transport-like"/>
</dbReference>
<dbReference type="InterPro" id="IPR036259">
    <property type="entry name" value="MFS_trans_sf"/>
</dbReference>
<dbReference type="InterPro" id="IPR003663">
    <property type="entry name" value="Sugar/inositol_transpt"/>
</dbReference>
<dbReference type="InterPro" id="IPR005829">
    <property type="entry name" value="Sugar_transporter_CS"/>
</dbReference>
<dbReference type="NCBIfam" id="TIGR00879">
    <property type="entry name" value="SP"/>
    <property type="match status" value="1"/>
</dbReference>
<dbReference type="PANTHER" id="PTHR23503:SF8">
    <property type="entry name" value="FACILITATED GLUCOSE TRANSPORTER PROTEIN 1"/>
    <property type="match status" value="1"/>
</dbReference>
<dbReference type="PANTHER" id="PTHR23503">
    <property type="entry name" value="SOLUTE CARRIER FAMILY 2"/>
    <property type="match status" value="1"/>
</dbReference>
<dbReference type="Pfam" id="PF00083">
    <property type="entry name" value="Sugar_tr"/>
    <property type="match status" value="1"/>
</dbReference>
<dbReference type="PRINTS" id="PR00171">
    <property type="entry name" value="SUGRTRNSPORT"/>
</dbReference>
<dbReference type="SUPFAM" id="SSF103473">
    <property type="entry name" value="MFS general substrate transporter"/>
    <property type="match status" value="1"/>
</dbReference>
<dbReference type="PROSITE" id="PS50850">
    <property type="entry name" value="MFS"/>
    <property type="match status" value="1"/>
</dbReference>
<dbReference type="PROSITE" id="PS00216">
    <property type="entry name" value="SUGAR_TRANSPORT_1"/>
    <property type="match status" value="1"/>
</dbReference>
<dbReference type="PROSITE" id="PS00217">
    <property type="entry name" value="SUGAR_TRANSPORT_2"/>
    <property type="match status" value="1"/>
</dbReference>